<gene>
    <name type="primary">vps10</name>
    <name type="ORF">AO090010000769</name>
</gene>
<feature type="signal peptide" evidence="2">
    <location>
        <begin position="1"/>
        <end position="23"/>
    </location>
</feature>
<feature type="chain" id="PRO_0000407507" description="Vacuolar protein sorting/targeting protein 10">
    <location>
        <begin position="24"/>
        <end position="1488"/>
    </location>
</feature>
<feature type="topological domain" description="Lumenal" evidence="2">
    <location>
        <begin position="24"/>
        <end position="1351"/>
    </location>
</feature>
<feature type="transmembrane region" description="Helical" evidence="2">
    <location>
        <begin position="1352"/>
        <end position="1372"/>
    </location>
</feature>
<feature type="topological domain" description="Cytoplasmic" evidence="2">
    <location>
        <begin position="1373"/>
        <end position="1405"/>
    </location>
</feature>
<feature type="transmembrane region" description="Helical" evidence="2">
    <location>
        <begin position="1406"/>
        <end position="1426"/>
    </location>
</feature>
<feature type="topological domain" description="Lumenal" evidence="2">
    <location>
        <begin position="1427"/>
        <end position="1488"/>
    </location>
</feature>
<feature type="repeat" description="BNR 1">
    <location>
        <begin position="63"/>
        <end position="72"/>
    </location>
</feature>
<feature type="repeat" description="BNR 2">
    <location>
        <begin position="380"/>
        <end position="389"/>
    </location>
</feature>
<feature type="repeat" description="BNR 3">
    <location>
        <begin position="440"/>
        <end position="450"/>
    </location>
</feature>
<feature type="repeat" description="BNR 4">
    <location>
        <begin position="482"/>
        <end position="490"/>
    </location>
</feature>
<feature type="repeat" description="BNR 5">
    <location>
        <begin position="720"/>
        <end position="730"/>
    </location>
</feature>
<feature type="repeat" description="BNR 6">
    <location>
        <begin position="1102"/>
        <end position="1112"/>
    </location>
</feature>
<feature type="repeat" description="BNR 7">
    <location>
        <begin position="1144"/>
        <end position="1153"/>
    </location>
</feature>
<feature type="glycosylation site" description="N-linked (GlcNAc...) asparagine" evidence="2">
    <location>
        <position position="301"/>
    </location>
</feature>
<feature type="glycosylation site" description="N-linked (GlcNAc...) asparagine" evidence="2">
    <location>
        <position position="325"/>
    </location>
</feature>
<feature type="glycosylation site" description="N-linked (GlcNAc...) asparagine" evidence="2">
    <location>
        <position position="481"/>
    </location>
</feature>
<feature type="glycosylation site" description="N-linked (GlcNAc...) asparagine" evidence="2">
    <location>
        <position position="845"/>
    </location>
</feature>
<feature type="glycosylation site" description="N-linked (GlcNAc...) asparagine" evidence="2">
    <location>
        <position position="967"/>
    </location>
</feature>
<feature type="glycosylation site" description="N-linked (GlcNAc...) asparagine" evidence="2">
    <location>
        <position position="1266"/>
    </location>
</feature>
<keyword id="KW-0325">Glycoprotein</keyword>
<keyword id="KW-0333">Golgi apparatus</keyword>
<keyword id="KW-0472">Membrane</keyword>
<keyword id="KW-0653">Protein transport</keyword>
<keyword id="KW-0675">Receptor</keyword>
<keyword id="KW-1185">Reference proteome</keyword>
<keyword id="KW-0677">Repeat</keyword>
<keyword id="KW-0732">Signal</keyword>
<keyword id="KW-0812">Transmembrane</keyword>
<keyword id="KW-1133">Transmembrane helix</keyword>
<keyword id="KW-0813">Transport</keyword>
<evidence type="ECO:0000250" key="1"/>
<evidence type="ECO:0000255" key="2"/>
<evidence type="ECO:0000269" key="3">
    <source>
    </source>
</evidence>
<evidence type="ECO:0000305" key="4"/>
<proteinExistence type="inferred from homology"/>
<accession>Q2TVY7</accession>
<sequence>MIYRWLLLVSCLLLALLAQRGAAKSSSPKIAPPTKIDHKPSSLFYFEDTDTVLMNTVNGDLLRSVDAGETWSVVEGDDGGMKHHVLLIRQHPYDNKKAYALGPNGRHWVTTDQAKTWASFNIAEFPAIRHYPLVFHGGDSSKVIFQGEECAGRYCIVRSYYTTDDFATVKLLRESTGGCAWAVGHPQFAEDLNLAEEIKDRSFCVVPGLKVPLPHANRLVYSDDYFKGNAEGTETKLQEGRPVSGVISTAAVKKFIVAAAKSKGTEELALYVTVDAKNWHRAEFDGHRIEEDAYTMLESTNYSLQVDVLTSPRSGMGVLFTSNSNGTYFTRNIEHTNRNSEGMVDFEKIAGIQGIVLVNTVQNPEEVESGSAKKKITSRISFDDGRTFQPLKSDGENLHLHSVTALRNIGRVFSSPAPGLVMGIGNTGNHLQEYAECNLYISDDAGVTWRRAIKHPHKYEFGDQGAVVIAVRDEGRVDKINYSLDHGKEWASVELQHKIYPTMVTTTPDSTSLKFIVVGSLKESQDGEHVIYSIDFDGLHERKCEEDDFEKWPARLDEHGKPDCLMGHKQFYMRRRANANCFVDEEFKDPQPIFEACKCTAEDFECEYRRTEDGKGCVIPSPLTPPEGECKKPDDKFMGPSGWRLIPGDACIRDGGENLDKEIERSCKDASSPSTDGKIRVTLQLLEARDYAQYYYLERQSSSSGSDETIIMLSSEHEVYVTHDHGKTWERPLKGEEITRVYLHPYSSDVAFLLTDGKEGFWTEDRGHTFKPFQAPAPPTQDRFLQVMAFHPVHKDRLIWTGAVDCHSGDCHSDAFIKKGRGKNWEPLLSYVQKCEFESRETRPNSTNLVYCEQFEKQSKNGRLQLLSSDDFFNDNEVQFVDVINYATMSEFIIVASRQPENPDSLVASTSVDGRTFARAQFPPNVQVPVQTAYTVLESSTHAVFLHVTASSTEGGEYGPIIKSNSNGTSYVLSISAVNRNSLGYVDFEKAQGLEGVAVVNVVSNVADVSKKVPKKLKTMITHNDGAQWMLLPPPTKDADGKSFGCSVVAGKGTDDCSLHLHGYTERKDERDTFASGSAIGLMMAVGNVGDHLAGGDEADTFITNDGGISWKSVKKGKYMWEYGDSGSVIVIVPESKPTKTIHYSLDEGDTWEEFQFSDVEVRINDISTVPSDTSKNFLLWARLSNSEVQDKFATFNIDFSGVRPRPCLLDENQGNSDDYYIWEPKHPFQENNCLFGHSEQYHRKKPSAQCWNDWRESHVHSIGTNCTCTRADYECDYNYEPQSDGSCALVPGLPKPDAMEICKKDPDTIEYWEPTGYRRIPQTTCQGGLNLDHFVSKPCPNKEEEYKQKHGISGVGLFFAIVTPLAVAGAAGYYAYSKWDGKFGQIRLGESAGTSQSFLSRDSWLVTVPIAIVAGTVAVARALPLLVTSLWRGASGFIRLGRGRGYSRPYASRGSFAARRGDYTSIVDDEDELLGVEDAELDEDDEA</sequence>
<organism>
    <name type="scientific">Aspergillus oryzae (strain ATCC 42149 / RIB 40)</name>
    <name type="common">Yellow koji mold</name>
    <dbReference type="NCBI Taxonomy" id="510516"/>
    <lineage>
        <taxon>Eukaryota</taxon>
        <taxon>Fungi</taxon>
        <taxon>Dikarya</taxon>
        <taxon>Ascomycota</taxon>
        <taxon>Pezizomycotina</taxon>
        <taxon>Eurotiomycetes</taxon>
        <taxon>Eurotiomycetidae</taxon>
        <taxon>Eurotiales</taxon>
        <taxon>Aspergillaceae</taxon>
        <taxon>Aspergillus</taxon>
        <taxon>Aspergillus subgen. Circumdati</taxon>
    </lineage>
</organism>
<protein>
    <recommendedName>
        <fullName>Vacuolar protein sorting/targeting protein 10</fullName>
    </recommendedName>
    <alternativeName>
        <fullName>Carboxypeptidase Y receptor</fullName>
        <shortName>CPY receptor</shortName>
    </alternativeName>
    <alternativeName>
        <fullName>Sortilin vps10</fullName>
    </alternativeName>
    <alternativeName>
        <fullName>Vacuolar protein sorting-associated protein 10</fullName>
    </alternativeName>
</protein>
<reference key="1">
    <citation type="journal article" date="2005" name="Nature">
        <title>Genome sequencing and analysis of Aspergillus oryzae.</title>
        <authorList>
            <person name="Machida M."/>
            <person name="Asai K."/>
            <person name="Sano M."/>
            <person name="Tanaka T."/>
            <person name="Kumagai T."/>
            <person name="Terai G."/>
            <person name="Kusumoto K."/>
            <person name="Arima T."/>
            <person name="Akita O."/>
            <person name="Kashiwagi Y."/>
            <person name="Abe K."/>
            <person name="Gomi K."/>
            <person name="Horiuchi H."/>
            <person name="Kitamoto K."/>
            <person name="Kobayashi T."/>
            <person name="Takeuchi M."/>
            <person name="Denning D.W."/>
            <person name="Galagan J.E."/>
            <person name="Nierman W.C."/>
            <person name="Yu J."/>
            <person name="Archer D.B."/>
            <person name="Bennett J.W."/>
            <person name="Bhatnagar D."/>
            <person name="Cleveland T.E."/>
            <person name="Fedorova N.D."/>
            <person name="Gotoh O."/>
            <person name="Horikawa H."/>
            <person name="Hosoyama A."/>
            <person name="Ichinomiya M."/>
            <person name="Igarashi R."/>
            <person name="Iwashita K."/>
            <person name="Juvvadi P.R."/>
            <person name="Kato M."/>
            <person name="Kato Y."/>
            <person name="Kin T."/>
            <person name="Kokubun A."/>
            <person name="Maeda H."/>
            <person name="Maeyama N."/>
            <person name="Maruyama J."/>
            <person name="Nagasaki H."/>
            <person name="Nakajima T."/>
            <person name="Oda K."/>
            <person name="Okada K."/>
            <person name="Paulsen I."/>
            <person name="Sakamoto K."/>
            <person name="Sawano T."/>
            <person name="Takahashi M."/>
            <person name="Takase K."/>
            <person name="Terabayashi Y."/>
            <person name="Wortman J.R."/>
            <person name="Yamada O."/>
            <person name="Yamagata Y."/>
            <person name="Anazawa H."/>
            <person name="Hata Y."/>
            <person name="Koide Y."/>
            <person name="Komori T."/>
            <person name="Koyama Y."/>
            <person name="Minetoki T."/>
            <person name="Suharnan S."/>
            <person name="Tanaka A."/>
            <person name="Isono K."/>
            <person name="Kuhara S."/>
            <person name="Ogasawara N."/>
            <person name="Kikuchi H."/>
        </authorList>
    </citation>
    <scope>NUCLEOTIDE SEQUENCE [LARGE SCALE GENOMIC DNA]</scope>
    <source>
        <strain>ATCC 42149 / RIB 40</strain>
    </source>
</reference>
<reference key="2">
    <citation type="journal article" date="2010" name="Appl. Environ. Microbiol.">
        <title>Enhanced production and secretion of heterologous proteins by the filamentous fungus Aspergillus oryzae via disruption of vacuolar protein sorting receptor gene Aovps10.</title>
        <authorList>
            <person name="Yoon J."/>
            <person name="Aishan T."/>
            <person name="Maruyama J."/>
            <person name="Kitamoto K."/>
        </authorList>
    </citation>
    <scope>FUNCTION</scope>
    <scope>SUBCELLULAR LOCATION</scope>
</reference>
<comment type="function">
    <text evidence="3">Functions as a sorting receptor in the Golgi compartment required for the intracellular sorting and delivery of soluble vacuolar proteins, like carboxypeptidase Y (CPY) and proteinase A. Executes multiple rounds of sorting by cycling between the late Golgi and a prevacuolar endosome-like compartment.</text>
</comment>
<comment type="subcellular location">
    <subcellularLocation>
        <location evidence="1">Golgi apparatus</location>
        <location evidence="1">trans-Golgi network membrane</location>
        <topology evidence="1">Multi-pass membrane protein</topology>
    </subcellularLocation>
    <subcellularLocation>
        <location evidence="3">Prevacuolar compartment membrane</location>
        <topology evidence="3">Multi-pass membrane protein</topology>
    </subcellularLocation>
    <text evidence="1">Cycles between the Golgi apparatus and the prevacuolar compartment.</text>
</comment>
<comment type="domain">
    <text>The lumenal domain contains two regions of approximately 650 AA that exhibit 20% identity. The cytoplasmic domain may serve as a Golgi retention/recycling signal.</text>
</comment>
<comment type="miscellaneous">
    <text>Present with 7210 molecules/cell in log phase SD medium.</text>
</comment>
<comment type="similarity">
    <text evidence="4">Belongs to the VPS10-related sortilin family.</text>
</comment>
<name>VPS10_ASPOR</name>
<dbReference type="EMBL" id="BA000056">
    <property type="protein sequence ID" value="BAE66586.1"/>
    <property type="molecule type" value="Genomic_DNA"/>
</dbReference>
<dbReference type="RefSeq" id="XP_001827719.1">
    <property type="nucleotide sequence ID" value="XM_001827667.1"/>
</dbReference>
<dbReference type="SMR" id="Q2TVY7"/>
<dbReference type="STRING" id="510516.Q2TVY7"/>
<dbReference type="GlyCosmos" id="Q2TVY7">
    <property type="glycosylation" value="6 sites, No reported glycans"/>
</dbReference>
<dbReference type="EnsemblFungi" id="BAE66586">
    <property type="protein sequence ID" value="BAE66586"/>
    <property type="gene ID" value="AO090010000769"/>
</dbReference>
<dbReference type="GeneID" id="5999853"/>
<dbReference type="KEGG" id="aor:AO090010000769"/>
<dbReference type="VEuPathDB" id="FungiDB:AO090010000769"/>
<dbReference type="HOGENOM" id="CLU_000700_0_0_1"/>
<dbReference type="OMA" id="ATMSEFI"/>
<dbReference type="OrthoDB" id="67529at5052"/>
<dbReference type="Proteomes" id="UP000006564">
    <property type="component" value="Chromosome 8"/>
</dbReference>
<dbReference type="GO" id="GO:0005829">
    <property type="term" value="C:cytosol"/>
    <property type="evidence" value="ECO:0007669"/>
    <property type="project" value="GOC"/>
</dbReference>
<dbReference type="GO" id="GO:0005794">
    <property type="term" value="C:Golgi apparatus"/>
    <property type="evidence" value="ECO:0007669"/>
    <property type="project" value="UniProtKB-SubCell"/>
</dbReference>
<dbReference type="GO" id="GO:0005770">
    <property type="term" value="C:late endosome"/>
    <property type="evidence" value="ECO:0000314"/>
    <property type="project" value="UniProtKB"/>
</dbReference>
<dbReference type="GO" id="GO:0016020">
    <property type="term" value="C:membrane"/>
    <property type="evidence" value="ECO:0007669"/>
    <property type="project" value="UniProtKB-KW"/>
</dbReference>
<dbReference type="GO" id="GO:0006895">
    <property type="term" value="P:Golgi to endosome transport"/>
    <property type="evidence" value="ECO:0007669"/>
    <property type="project" value="TreeGrafter"/>
</dbReference>
<dbReference type="GO" id="GO:0006896">
    <property type="term" value="P:Golgi to vacuole transport"/>
    <property type="evidence" value="ECO:0007669"/>
    <property type="project" value="TreeGrafter"/>
</dbReference>
<dbReference type="GO" id="GO:0006623">
    <property type="term" value="P:protein targeting to vacuole"/>
    <property type="evidence" value="ECO:0000315"/>
    <property type="project" value="UniProtKB"/>
</dbReference>
<dbReference type="GO" id="GO:0007034">
    <property type="term" value="P:vacuolar transport"/>
    <property type="evidence" value="ECO:0000315"/>
    <property type="project" value="UniProtKB"/>
</dbReference>
<dbReference type="CDD" id="cd15482">
    <property type="entry name" value="Sialidase_non-viral"/>
    <property type="match status" value="1"/>
</dbReference>
<dbReference type="FunFam" id="2.10.70.80:FF:000006">
    <property type="entry name" value="Sortilin"/>
    <property type="match status" value="1"/>
</dbReference>
<dbReference type="FunFam" id="2.130.10.10:FF:000676">
    <property type="entry name" value="Sortilin"/>
    <property type="match status" value="1"/>
</dbReference>
<dbReference type="FunFam" id="2.130.10.10:FF:001538">
    <property type="entry name" value="Sortilin"/>
    <property type="match status" value="1"/>
</dbReference>
<dbReference type="FunFam" id="3.30.60.270:FF:000005">
    <property type="entry name" value="Sortilin"/>
    <property type="match status" value="2"/>
</dbReference>
<dbReference type="FunFam" id="2.10.70.80:FF:000001">
    <property type="entry name" value="Sortilin-related VPS10 domain-containing receptor 1"/>
    <property type="match status" value="1"/>
</dbReference>
<dbReference type="Gene3D" id="2.10.70.80">
    <property type="match status" value="2"/>
</dbReference>
<dbReference type="Gene3D" id="3.30.60.270">
    <property type="match status" value="2"/>
</dbReference>
<dbReference type="Gene3D" id="2.130.10.10">
    <property type="entry name" value="YVTN repeat-like/Quinoprotein amine dehydrogenase"/>
    <property type="match status" value="3"/>
</dbReference>
<dbReference type="InterPro" id="IPR036278">
    <property type="entry name" value="Sialidase_sf"/>
</dbReference>
<dbReference type="InterPro" id="IPR031777">
    <property type="entry name" value="Sortilin_C"/>
</dbReference>
<dbReference type="InterPro" id="IPR031778">
    <property type="entry name" value="Sortilin_N"/>
</dbReference>
<dbReference type="InterPro" id="IPR006581">
    <property type="entry name" value="VPS10"/>
</dbReference>
<dbReference type="InterPro" id="IPR050310">
    <property type="entry name" value="VPS10-sortilin"/>
</dbReference>
<dbReference type="InterPro" id="IPR015943">
    <property type="entry name" value="WD40/YVTN_repeat-like_dom_sf"/>
</dbReference>
<dbReference type="PANTHER" id="PTHR12106">
    <property type="entry name" value="SORTILIN RELATED"/>
    <property type="match status" value="1"/>
</dbReference>
<dbReference type="PANTHER" id="PTHR12106:SF27">
    <property type="entry name" value="SORTILIN-RELATED RECEPTOR"/>
    <property type="match status" value="1"/>
</dbReference>
<dbReference type="Pfam" id="PF15902">
    <property type="entry name" value="Sortilin-Vps10"/>
    <property type="match status" value="2"/>
</dbReference>
<dbReference type="Pfam" id="PF15901">
    <property type="entry name" value="Sortilin_C"/>
    <property type="match status" value="2"/>
</dbReference>
<dbReference type="SMART" id="SM00602">
    <property type="entry name" value="VPS10"/>
    <property type="match status" value="2"/>
</dbReference>
<dbReference type="SUPFAM" id="SSF110296">
    <property type="entry name" value="Oligoxyloglucan reducing end-specific cellobiohydrolase"/>
    <property type="match status" value="2"/>
</dbReference>
<dbReference type="SUPFAM" id="SSF50939">
    <property type="entry name" value="Sialidases"/>
    <property type="match status" value="1"/>
</dbReference>